<proteinExistence type="evidence at transcript level"/>
<comment type="subcellular location">
    <subcellularLocation>
        <location evidence="3">Cell membrane</location>
        <topology evidence="3">Single-pass membrane protein</topology>
    </subcellularLocation>
</comment>
<comment type="induction">
    <text evidence="2">Transiently induced by cold shock in a PNPase-dependent fashion.</text>
</comment>
<comment type="caution">
    <text evidence="4">Was originally thought to suppress the temperature-sensitive growth phenotype of fabA6(Ts) mutants.</text>
</comment>
<protein>
    <recommendedName>
        <fullName>Uncharacterized protein YmcE</fullName>
    </recommendedName>
</protein>
<keyword id="KW-1003">Cell membrane</keyword>
<keyword id="KW-0472">Membrane</keyword>
<keyword id="KW-1185">Reference proteome</keyword>
<keyword id="KW-0812">Transmembrane</keyword>
<keyword id="KW-1133">Transmembrane helix</keyword>
<gene>
    <name type="primary">ymcE</name>
    <name type="synonym">sfa</name>
    <name type="ordered locus">b0991</name>
    <name type="ordered locus">JW0975</name>
</gene>
<dbReference type="EMBL" id="U38541">
    <property type="protein sequence ID" value="AAC44390.1"/>
    <property type="molecule type" value="Genomic_DNA"/>
</dbReference>
<dbReference type="EMBL" id="U00096">
    <property type="protein sequence ID" value="AAC74076.1"/>
    <property type="molecule type" value="Genomic_DNA"/>
</dbReference>
<dbReference type="EMBL" id="AP009048">
    <property type="protein sequence ID" value="BAA35757.1"/>
    <property type="molecule type" value="Genomic_DNA"/>
</dbReference>
<dbReference type="PIR" id="E64840">
    <property type="entry name" value="E64840"/>
</dbReference>
<dbReference type="RefSeq" id="NP_415511.1">
    <property type="nucleotide sequence ID" value="NC_000913.3"/>
</dbReference>
<dbReference type="RefSeq" id="WP_001309400.1">
    <property type="nucleotide sequence ID" value="NZ_SSZK01000002.1"/>
</dbReference>
<dbReference type="BioGRID" id="4260048">
    <property type="interactions" value="6"/>
</dbReference>
<dbReference type="FunCoup" id="P0AAA5">
    <property type="interactions" value="7"/>
</dbReference>
<dbReference type="STRING" id="511145.b0991"/>
<dbReference type="PaxDb" id="511145-b0991"/>
<dbReference type="EnsemblBacteria" id="AAC74076">
    <property type="protein sequence ID" value="AAC74076"/>
    <property type="gene ID" value="b0991"/>
</dbReference>
<dbReference type="GeneID" id="93776420"/>
<dbReference type="GeneID" id="946951"/>
<dbReference type="KEGG" id="ecj:JW0975"/>
<dbReference type="KEGG" id="eco:b0991"/>
<dbReference type="KEGG" id="ecoc:C3026_06040"/>
<dbReference type="PATRIC" id="fig|83333.103.peg.1773"/>
<dbReference type="EchoBASE" id="EB3021"/>
<dbReference type="eggNOG" id="ENOG5033ZMW">
    <property type="taxonomic scope" value="Bacteria"/>
</dbReference>
<dbReference type="HOGENOM" id="CLU_2478691_0_0_6"/>
<dbReference type="InParanoid" id="P0AAA5"/>
<dbReference type="OMA" id="REMAYNI"/>
<dbReference type="OrthoDB" id="9880280at2"/>
<dbReference type="BioCyc" id="EcoCyc:G6512-MONOMER"/>
<dbReference type="PRO" id="PR:P0AAA5"/>
<dbReference type="Proteomes" id="UP000000625">
    <property type="component" value="Chromosome"/>
</dbReference>
<dbReference type="GO" id="GO:0005886">
    <property type="term" value="C:plasma membrane"/>
    <property type="evidence" value="ECO:0007669"/>
    <property type="project" value="UniProtKB-SubCell"/>
</dbReference>
<dbReference type="InterPro" id="IPR031853">
    <property type="entry name" value="YmcE_antitoxin"/>
</dbReference>
<dbReference type="NCBIfam" id="NF007379">
    <property type="entry name" value="PRK09891.1"/>
    <property type="match status" value="1"/>
</dbReference>
<dbReference type="Pfam" id="PF15939">
    <property type="entry name" value="YmcE_antitoxin"/>
    <property type="match status" value="1"/>
</dbReference>
<feature type="chain" id="PRO_0000097707" description="Uncharacterized protein YmcE">
    <location>
        <begin position="1"/>
        <end position="76"/>
    </location>
</feature>
<feature type="transmembrane region" description="Helical" evidence="1">
    <location>
        <begin position="18"/>
        <end position="38"/>
    </location>
</feature>
<reference key="1">
    <citation type="journal article" date="1996" name="J. Bacteriol.">
        <title>Increased unsaturated fatty acid production associated with a suppressor of the fabA6(Ts) mutation in Escherichia coli.</title>
        <authorList>
            <person name="Rock C.O."/>
            <person name="Tsay J.-T."/>
            <person name="Heath R."/>
            <person name="Jackowski S."/>
        </authorList>
    </citation>
    <scope>NUCLEOTIDE SEQUENCE [GENOMIC DNA]</scope>
    <source>
        <strain>K12</strain>
    </source>
</reference>
<reference key="2">
    <citation type="journal article" date="1996" name="DNA Res.">
        <title>A 718-kb DNA sequence of the Escherichia coli K-12 genome corresponding to the 12.7-28.0 min region on the linkage map.</title>
        <authorList>
            <person name="Oshima T."/>
            <person name="Aiba H."/>
            <person name="Baba T."/>
            <person name="Fujita K."/>
            <person name="Hayashi K."/>
            <person name="Honjo A."/>
            <person name="Ikemoto K."/>
            <person name="Inada T."/>
            <person name="Itoh T."/>
            <person name="Kajihara M."/>
            <person name="Kanai K."/>
            <person name="Kashimoto K."/>
            <person name="Kimura S."/>
            <person name="Kitagawa M."/>
            <person name="Makino K."/>
            <person name="Masuda S."/>
            <person name="Miki T."/>
            <person name="Mizobuchi K."/>
            <person name="Mori H."/>
            <person name="Motomura K."/>
            <person name="Nakamura Y."/>
            <person name="Nashimoto H."/>
            <person name="Nishio Y."/>
            <person name="Saito N."/>
            <person name="Sampei G."/>
            <person name="Seki Y."/>
            <person name="Tagami H."/>
            <person name="Takemoto K."/>
            <person name="Wada C."/>
            <person name="Yamamoto Y."/>
            <person name="Yano M."/>
            <person name="Horiuchi T."/>
        </authorList>
    </citation>
    <scope>NUCLEOTIDE SEQUENCE [LARGE SCALE GENOMIC DNA]</scope>
    <source>
        <strain>K12 / W3110 / ATCC 27325 / DSM 5911</strain>
    </source>
</reference>
<reference key="3">
    <citation type="journal article" date="1997" name="Science">
        <title>The complete genome sequence of Escherichia coli K-12.</title>
        <authorList>
            <person name="Blattner F.R."/>
            <person name="Plunkett G. III"/>
            <person name="Bloch C.A."/>
            <person name="Perna N.T."/>
            <person name="Burland V."/>
            <person name="Riley M."/>
            <person name="Collado-Vides J."/>
            <person name="Glasner J.D."/>
            <person name="Rode C.K."/>
            <person name="Mayhew G.F."/>
            <person name="Gregor J."/>
            <person name="Davis N.W."/>
            <person name="Kirkpatrick H.A."/>
            <person name="Goeden M.A."/>
            <person name="Rose D.J."/>
            <person name="Mau B."/>
            <person name="Shao Y."/>
        </authorList>
    </citation>
    <scope>NUCLEOTIDE SEQUENCE [LARGE SCALE GENOMIC DNA]</scope>
    <source>
        <strain>K12 / MG1655 / ATCC 47076</strain>
    </source>
</reference>
<reference key="4">
    <citation type="journal article" date="2006" name="Mol. Syst. Biol.">
        <title>Highly accurate genome sequences of Escherichia coli K-12 strains MG1655 and W3110.</title>
        <authorList>
            <person name="Hayashi K."/>
            <person name="Morooka N."/>
            <person name="Yamamoto Y."/>
            <person name="Fujita K."/>
            <person name="Isono K."/>
            <person name="Choi S."/>
            <person name="Ohtsubo E."/>
            <person name="Baba T."/>
            <person name="Wanner B.L."/>
            <person name="Mori H."/>
            <person name="Horiuchi T."/>
        </authorList>
    </citation>
    <scope>NUCLEOTIDE SEQUENCE [LARGE SCALE GENOMIC DNA]</scope>
    <source>
        <strain>K12 / W3110 / ATCC 27325 / DSM 5911</strain>
    </source>
</reference>
<reference key="5">
    <citation type="journal article" date="2001" name="J. Bacteriol.">
        <title>Overexpression of yccL (gnsA) and ydfY (gnsB) increases levels of unsaturated fatty acids and suppresses both the temperature-sensitive fabA6 mutation and cold-sensitive secG null mutation of Escherichia coli.</title>
        <authorList>
            <person name="Sugai R."/>
            <person name="Shimizu H."/>
            <person name="Nishiyama K."/>
            <person name="Tokuda H."/>
        </authorList>
    </citation>
    <scope>SHOWS THAT IT IS NOT A SUPPRESSOR OF FABA6(TS) MUTANTS</scope>
</reference>
<reference key="6">
    <citation type="journal article" date="2003" name="Res. Microbiol.">
        <title>Changes in Escherichia coli transcriptome during acclimatization at low temperature.</title>
        <authorList>
            <person name="Polissi A."/>
            <person name="De Laurentis W."/>
            <person name="Zangrossi S."/>
            <person name="Briani F."/>
            <person name="Longhi V."/>
            <person name="Pesole G."/>
            <person name="Deho G."/>
        </authorList>
    </citation>
    <scope>INDUCTION BY COLD SHOCK</scope>
    <source>
        <strain>K12 / MG1655 / ATCC 47076</strain>
    </source>
</reference>
<name>YMCE_ECOLI</name>
<evidence type="ECO:0000255" key="1"/>
<evidence type="ECO:0000269" key="2">
    <source>
    </source>
</evidence>
<evidence type="ECO:0000305" key="3"/>
<evidence type="ECO:0000305" key="4">
    <source>
    </source>
</evidence>
<accession>P0AAA5</accession>
<accession>P52634</accession>
<organism>
    <name type="scientific">Escherichia coli (strain K12)</name>
    <dbReference type="NCBI Taxonomy" id="83333"/>
    <lineage>
        <taxon>Bacteria</taxon>
        <taxon>Pseudomonadati</taxon>
        <taxon>Pseudomonadota</taxon>
        <taxon>Gammaproteobacteria</taxon>
        <taxon>Enterobacterales</taxon>
        <taxon>Enterobacteriaceae</taxon>
        <taxon>Escherichia</taxon>
    </lineage>
</organism>
<sequence length="76" mass="8727">MRRWISQNNIRLPRGAFFISALFFFNAVCIVSDNLLIIESFGEMAYNISYLTRVPGTNTLLACCCLLRPEEVNSEY</sequence>